<organism>
    <name type="scientific">Staphylococcus epidermidis (strain ATCC 12228 / FDA PCI 1200)</name>
    <dbReference type="NCBI Taxonomy" id="176280"/>
    <lineage>
        <taxon>Bacteria</taxon>
        <taxon>Bacillati</taxon>
        <taxon>Bacillota</taxon>
        <taxon>Bacilli</taxon>
        <taxon>Bacillales</taxon>
        <taxon>Staphylococcaceae</taxon>
        <taxon>Staphylococcus</taxon>
    </lineage>
</organism>
<protein>
    <recommendedName>
        <fullName evidence="1">7-cyano-7-deazaguanine synthase</fullName>
        <ecNumber evidence="1">6.3.4.20</ecNumber>
    </recommendedName>
    <alternativeName>
        <fullName evidence="1">7-cyano-7-carbaguanine synthase</fullName>
    </alternativeName>
    <alternativeName>
        <fullName evidence="1">PreQ(0) synthase</fullName>
    </alternativeName>
    <alternativeName>
        <fullName evidence="1">Queuosine biosynthesis protein QueC</fullName>
    </alternativeName>
</protein>
<comment type="function">
    <text evidence="1">Catalyzes the ATP-dependent conversion of 7-carboxy-7-deazaguanine (CDG) to 7-cyano-7-deazaguanine (preQ(0)).</text>
</comment>
<comment type="catalytic activity">
    <reaction evidence="1">
        <text>7-carboxy-7-deazaguanine + NH4(+) + ATP = 7-cyano-7-deazaguanine + ADP + phosphate + H2O + H(+)</text>
        <dbReference type="Rhea" id="RHEA:27982"/>
        <dbReference type="ChEBI" id="CHEBI:15377"/>
        <dbReference type="ChEBI" id="CHEBI:15378"/>
        <dbReference type="ChEBI" id="CHEBI:28938"/>
        <dbReference type="ChEBI" id="CHEBI:30616"/>
        <dbReference type="ChEBI" id="CHEBI:43474"/>
        <dbReference type="ChEBI" id="CHEBI:45075"/>
        <dbReference type="ChEBI" id="CHEBI:61036"/>
        <dbReference type="ChEBI" id="CHEBI:456216"/>
        <dbReference type="EC" id="6.3.4.20"/>
    </reaction>
</comment>
<comment type="cofactor">
    <cofactor evidence="1">
        <name>Zn(2+)</name>
        <dbReference type="ChEBI" id="CHEBI:29105"/>
    </cofactor>
    <text evidence="1">Binds 1 zinc ion per subunit.</text>
</comment>
<comment type="pathway">
    <text evidence="1">Purine metabolism; 7-cyano-7-deazaguanine biosynthesis.</text>
</comment>
<comment type="subunit">
    <text evidence="1">Homodimer.</text>
</comment>
<comment type="similarity">
    <text evidence="1">Belongs to the QueC family.</text>
</comment>
<proteinExistence type="inferred from homology"/>
<keyword id="KW-0067">ATP-binding</keyword>
<keyword id="KW-0436">Ligase</keyword>
<keyword id="KW-0479">Metal-binding</keyword>
<keyword id="KW-0547">Nucleotide-binding</keyword>
<keyword id="KW-0671">Queuosine biosynthesis</keyword>
<keyword id="KW-0862">Zinc</keyword>
<accession>Q8CTH8</accession>
<name>QUEC_STAES</name>
<evidence type="ECO:0000255" key="1">
    <source>
        <dbReference type="HAMAP-Rule" id="MF_01633"/>
    </source>
</evidence>
<dbReference type="EC" id="6.3.4.20" evidence="1"/>
<dbReference type="EMBL" id="AE015929">
    <property type="protein sequence ID" value="AAO04084.1"/>
    <property type="molecule type" value="Genomic_DNA"/>
</dbReference>
<dbReference type="RefSeq" id="NP_764042.1">
    <property type="nucleotide sequence ID" value="NC_004461.1"/>
</dbReference>
<dbReference type="RefSeq" id="WP_001830328.1">
    <property type="nucleotide sequence ID" value="NZ_WBME01000068.1"/>
</dbReference>
<dbReference type="SMR" id="Q8CTH8"/>
<dbReference type="KEGG" id="sep:SE_0487"/>
<dbReference type="PATRIC" id="fig|176280.10.peg.459"/>
<dbReference type="eggNOG" id="COG0603">
    <property type="taxonomic scope" value="Bacteria"/>
</dbReference>
<dbReference type="HOGENOM" id="CLU_081854_0_0_9"/>
<dbReference type="OrthoDB" id="9789567at2"/>
<dbReference type="UniPathway" id="UPA00391"/>
<dbReference type="Proteomes" id="UP000001411">
    <property type="component" value="Chromosome"/>
</dbReference>
<dbReference type="GO" id="GO:0005524">
    <property type="term" value="F:ATP binding"/>
    <property type="evidence" value="ECO:0007669"/>
    <property type="project" value="UniProtKB-UniRule"/>
</dbReference>
<dbReference type="GO" id="GO:0016879">
    <property type="term" value="F:ligase activity, forming carbon-nitrogen bonds"/>
    <property type="evidence" value="ECO:0007669"/>
    <property type="project" value="UniProtKB-UniRule"/>
</dbReference>
<dbReference type="GO" id="GO:0008270">
    <property type="term" value="F:zinc ion binding"/>
    <property type="evidence" value="ECO:0007669"/>
    <property type="project" value="UniProtKB-UniRule"/>
</dbReference>
<dbReference type="GO" id="GO:0008616">
    <property type="term" value="P:queuosine biosynthetic process"/>
    <property type="evidence" value="ECO:0007669"/>
    <property type="project" value="UniProtKB-UniRule"/>
</dbReference>
<dbReference type="CDD" id="cd01995">
    <property type="entry name" value="QueC-like"/>
    <property type="match status" value="1"/>
</dbReference>
<dbReference type="FunFam" id="3.40.50.620:FF:000017">
    <property type="entry name" value="7-cyano-7-deazaguanine synthase"/>
    <property type="match status" value="1"/>
</dbReference>
<dbReference type="Gene3D" id="3.40.50.620">
    <property type="entry name" value="HUPs"/>
    <property type="match status" value="1"/>
</dbReference>
<dbReference type="HAMAP" id="MF_01633">
    <property type="entry name" value="QueC"/>
    <property type="match status" value="1"/>
</dbReference>
<dbReference type="InterPro" id="IPR018317">
    <property type="entry name" value="QueC"/>
</dbReference>
<dbReference type="InterPro" id="IPR014729">
    <property type="entry name" value="Rossmann-like_a/b/a_fold"/>
</dbReference>
<dbReference type="NCBIfam" id="TIGR00364">
    <property type="entry name" value="7-cyano-7-deazaguanine synthase QueC"/>
    <property type="match status" value="1"/>
</dbReference>
<dbReference type="PANTHER" id="PTHR42914">
    <property type="entry name" value="7-CYANO-7-DEAZAGUANINE SYNTHASE"/>
    <property type="match status" value="1"/>
</dbReference>
<dbReference type="PANTHER" id="PTHR42914:SF1">
    <property type="entry name" value="7-CYANO-7-DEAZAGUANINE SYNTHASE"/>
    <property type="match status" value="1"/>
</dbReference>
<dbReference type="Pfam" id="PF06508">
    <property type="entry name" value="QueC"/>
    <property type="match status" value="1"/>
</dbReference>
<dbReference type="PIRSF" id="PIRSF006293">
    <property type="entry name" value="ExsB"/>
    <property type="match status" value="1"/>
</dbReference>
<dbReference type="SUPFAM" id="SSF52402">
    <property type="entry name" value="Adenine nucleotide alpha hydrolases-like"/>
    <property type="match status" value="1"/>
</dbReference>
<reference key="1">
    <citation type="journal article" date="2003" name="Mol. Microbiol.">
        <title>Genome-based analysis of virulence genes in a non-biofilm-forming Staphylococcus epidermidis strain (ATCC 12228).</title>
        <authorList>
            <person name="Zhang Y.-Q."/>
            <person name="Ren S.-X."/>
            <person name="Li H.-L."/>
            <person name="Wang Y.-X."/>
            <person name="Fu G."/>
            <person name="Yang J."/>
            <person name="Qin Z.-Q."/>
            <person name="Miao Y.-G."/>
            <person name="Wang W.-Y."/>
            <person name="Chen R.-S."/>
            <person name="Shen Y."/>
            <person name="Chen Z."/>
            <person name="Yuan Z.-H."/>
            <person name="Zhao G.-P."/>
            <person name="Qu D."/>
            <person name="Danchin A."/>
            <person name="Wen Y.-M."/>
        </authorList>
    </citation>
    <scope>NUCLEOTIDE SEQUENCE [LARGE SCALE GENOMIC DNA]</scope>
    <source>
        <strain>ATCC 12228 / FDA PCI 1200</strain>
    </source>
</reference>
<feature type="chain" id="PRO_0000246937" description="7-cyano-7-deazaguanine synthase">
    <location>
        <begin position="1"/>
        <end position="223"/>
    </location>
</feature>
<feature type="binding site" evidence="1">
    <location>
        <begin position="15"/>
        <end position="25"/>
    </location>
    <ligand>
        <name>ATP</name>
        <dbReference type="ChEBI" id="CHEBI:30616"/>
    </ligand>
</feature>
<feature type="binding site" evidence="1">
    <location>
        <position position="191"/>
    </location>
    <ligand>
        <name>Zn(2+)</name>
        <dbReference type="ChEBI" id="CHEBI:29105"/>
    </ligand>
</feature>
<feature type="binding site" evidence="1">
    <location>
        <position position="200"/>
    </location>
    <ligand>
        <name>Zn(2+)</name>
        <dbReference type="ChEBI" id="CHEBI:29105"/>
    </ligand>
</feature>
<feature type="binding site" evidence="1">
    <location>
        <position position="203"/>
    </location>
    <ligand>
        <name>Zn(2+)</name>
        <dbReference type="ChEBI" id="CHEBI:29105"/>
    </ligand>
</feature>
<feature type="binding site" evidence="1">
    <location>
        <position position="206"/>
    </location>
    <ligand>
        <name>Zn(2+)</name>
        <dbReference type="ChEBI" id="CHEBI:29105"/>
    </ligand>
</feature>
<sequence length="223" mass="25172">MSQNDLNKEKALVVFSGGQDSTTCLFYAKKHFKEVELVTFNYGQRHDKEIEVAKKIAKEQNLKHHILDMSLLSQLTPNALTQHELSIEDNDDGIPNTFVPARNLLFLSFAGALAYQIHAKHIITGVCETDFSGYPDCRDSFIKSMNVTLSLSMDKDFVIHTPLMWLDKAQTWALSDKLGVLDYIRHNTLTCYNGIIGDGCGECPACHLRARGLKHYLEHKGEE</sequence>
<gene>
    <name evidence="1" type="primary">queC</name>
    <name type="ordered locus">SE_0487</name>
</gene>